<organism>
    <name type="scientific">Schizosaccharomyces pombe (strain 972 / ATCC 24843)</name>
    <name type="common">Fission yeast</name>
    <dbReference type="NCBI Taxonomy" id="284812"/>
    <lineage>
        <taxon>Eukaryota</taxon>
        <taxon>Fungi</taxon>
        <taxon>Dikarya</taxon>
        <taxon>Ascomycota</taxon>
        <taxon>Taphrinomycotina</taxon>
        <taxon>Schizosaccharomycetes</taxon>
        <taxon>Schizosaccharomycetales</taxon>
        <taxon>Schizosaccharomycetaceae</taxon>
        <taxon>Schizosaccharomyces</taxon>
    </lineage>
</organism>
<feature type="transit peptide" description="Mitochondrion" evidence="2">
    <location>
        <begin position="1"/>
        <end status="unknown"/>
    </location>
</feature>
<feature type="chain" id="PRO_0000316230" description="Putative glycine cleavage system H protein, mitochondrial">
    <location>
        <begin status="unknown"/>
        <end position="169"/>
    </location>
</feature>
<feature type="domain" description="Lipoyl-binding" evidence="3">
    <location>
        <begin position="60"/>
        <end position="142"/>
    </location>
</feature>
<feature type="modified residue" description="N6-lipoyllysine" evidence="1 3">
    <location>
        <position position="101"/>
    </location>
</feature>
<feature type="modified residue" description="Phosphoserine" evidence="5">
    <location>
        <position position="131"/>
    </location>
</feature>
<accession>Q9HDV9</accession>
<evidence type="ECO:0000250" key="1"/>
<evidence type="ECO:0000255" key="2"/>
<evidence type="ECO:0000255" key="3">
    <source>
        <dbReference type="PROSITE-ProRule" id="PRU01066"/>
    </source>
</evidence>
<evidence type="ECO:0000269" key="4">
    <source>
    </source>
</evidence>
<evidence type="ECO:0000269" key="5">
    <source>
    </source>
</evidence>
<evidence type="ECO:0000305" key="6"/>
<dbReference type="EMBL" id="CU329671">
    <property type="protein sequence ID" value="CAC19751.1"/>
    <property type="molecule type" value="Genomic_DNA"/>
</dbReference>
<dbReference type="RefSeq" id="NP_596169.1">
    <property type="nucleotide sequence ID" value="NM_001022089.2"/>
</dbReference>
<dbReference type="SMR" id="Q9HDV9"/>
<dbReference type="FunCoup" id="Q9HDV9">
    <property type="interactions" value="671"/>
</dbReference>
<dbReference type="STRING" id="284812.Q9HDV9"/>
<dbReference type="iPTMnet" id="Q9HDV9"/>
<dbReference type="PaxDb" id="4896-SPBP19A11.01.1"/>
<dbReference type="EnsemblFungi" id="SPBP19A11.01.1">
    <property type="protein sequence ID" value="SPBP19A11.01.1:pep"/>
    <property type="gene ID" value="SPBP19A11.01"/>
</dbReference>
<dbReference type="GeneID" id="2541294"/>
<dbReference type="KEGG" id="spo:2541294"/>
<dbReference type="PomBase" id="SPBP19A11.01">
    <property type="gene designation" value="gcv3"/>
</dbReference>
<dbReference type="VEuPathDB" id="FungiDB:SPBP19A11.01"/>
<dbReference type="eggNOG" id="KOG3373">
    <property type="taxonomic scope" value="Eukaryota"/>
</dbReference>
<dbReference type="HOGENOM" id="CLU_097408_1_1_1"/>
<dbReference type="InParanoid" id="Q9HDV9"/>
<dbReference type="OMA" id="KEHEWIR"/>
<dbReference type="PhylomeDB" id="Q9HDV9"/>
<dbReference type="Reactome" id="R-SPO-6783984">
    <property type="pathway name" value="Glycine degradation"/>
</dbReference>
<dbReference type="Reactome" id="R-SPO-9857492">
    <property type="pathway name" value="Protein lipoylation"/>
</dbReference>
<dbReference type="PRO" id="PR:Q9HDV9"/>
<dbReference type="Proteomes" id="UP000002485">
    <property type="component" value="Chromosome II"/>
</dbReference>
<dbReference type="GO" id="GO:0005960">
    <property type="term" value="C:glycine cleavage complex"/>
    <property type="evidence" value="ECO:0000318"/>
    <property type="project" value="GO_Central"/>
</dbReference>
<dbReference type="GO" id="GO:0005759">
    <property type="term" value="C:mitochondrial matrix"/>
    <property type="evidence" value="ECO:0000305"/>
    <property type="project" value="PomBase"/>
</dbReference>
<dbReference type="GO" id="GO:0005739">
    <property type="term" value="C:mitochondrion"/>
    <property type="evidence" value="ECO:0007005"/>
    <property type="project" value="PomBase"/>
</dbReference>
<dbReference type="GO" id="GO:0019464">
    <property type="term" value="P:glycine decarboxylation via glycine cleavage system"/>
    <property type="evidence" value="ECO:0000318"/>
    <property type="project" value="GO_Central"/>
</dbReference>
<dbReference type="CDD" id="cd06848">
    <property type="entry name" value="GCS_H"/>
    <property type="match status" value="1"/>
</dbReference>
<dbReference type="Gene3D" id="2.40.50.100">
    <property type="match status" value="1"/>
</dbReference>
<dbReference type="HAMAP" id="MF_00272">
    <property type="entry name" value="GcvH"/>
    <property type="match status" value="1"/>
</dbReference>
<dbReference type="InterPro" id="IPR000089">
    <property type="entry name" value="Biotin_lipoyl"/>
</dbReference>
<dbReference type="InterPro" id="IPR002930">
    <property type="entry name" value="GCV_H"/>
</dbReference>
<dbReference type="InterPro" id="IPR033753">
    <property type="entry name" value="GCV_H/Fam206"/>
</dbReference>
<dbReference type="InterPro" id="IPR017453">
    <property type="entry name" value="GCV_H_sub"/>
</dbReference>
<dbReference type="InterPro" id="IPR011053">
    <property type="entry name" value="Single_hybrid_motif"/>
</dbReference>
<dbReference type="NCBIfam" id="TIGR00527">
    <property type="entry name" value="gcvH"/>
    <property type="match status" value="1"/>
</dbReference>
<dbReference type="NCBIfam" id="NF002270">
    <property type="entry name" value="PRK01202.1"/>
    <property type="match status" value="1"/>
</dbReference>
<dbReference type="PANTHER" id="PTHR11715">
    <property type="entry name" value="GLYCINE CLEAVAGE SYSTEM H PROTEIN"/>
    <property type="match status" value="1"/>
</dbReference>
<dbReference type="PANTHER" id="PTHR11715:SF3">
    <property type="entry name" value="GLYCINE CLEAVAGE SYSTEM H PROTEIN-RELATED"/>
    <property type="match status" value="1"/>
</dbReference>
<dbReference type="Pfam" id="PF01597">
    <property type="entry name" value="GCV_H"/>
    <property type="match status" value="1"/>
</dbReference>
<dbReference type="SUPFAM" id="SSF51230">
    <property type="entry name" value="Single hybrid motif"/>
    <property type="match status" value="1"/>
</dbReference>
<dbReference type="PROSITE" id="PS50968">
    <property type="entry name" value="BIOTINYL_LIPOYL"/>
    <property type="match status" value="1"/>
</dbReference>
<reference key="1">
    <citation type="journal article" date="2002" name="Nature">
        <title>The genome sequence of Schizosaccharomyces pombe.</title>
        <authorList>
            <person name="Wood V."/>
            <person name="Gwilliam R."/>
            <person name="Rajandream M.A."/>
            <person name="Lyne M.H."/>
            <person name="Lyne R."/>
            <person name="Stewart A."/>
            <person name="Sgouros J.G."/>
            <person name="Peat N."/>
            <person name="Hayles J."/>
            <person name="Baker S.G."/>
            <person name="Basham D."/>
            <person name="Bowman S."/>
            <person name="Brooks K."/>
            <person name="Brown D."/>
            <person name="Brown S."/>
            <person name="Chillingworth T."/>
            <person name="Churcher C.M."/>
            <person name="Collins M."/>
            <person name="Connor R."/>
            <person name="Cronin A."/>
            <person name="Davis P."/>
            <person name="Feltwell T."/>
            <person name="Fraser A."/>
            <person name="Gentles S."/>
            <person name="Goble A."/>
            <person name="Hamlin N."/>
            <person name="Harris D.E."/>
            <person name="Hidalgo J."/>
            <person name="Hodgson G."/>
            <person name="Holroyd S."/>
            <person name="Hornsby T."/>
            <person name="Howarth S."/>
            <person name="Huckle E.J."/>
            <person name="Hunt S."/>
            <person name="Jagels K."/>
            <person name="James K.D."/>
            <person name="Jones L."/>
            <person name="Jones M."/>
            <person name="Leather S."/>
            <person name="McDonald S."/>
            <person name="McLean J."/>
            <person name="Mooney P."/>
            <person name="Moule S."/>
            <person name="Mungall K.L."/>
            <person name="Murphy L.D."/>
            <person name="Niblett D."/>
            <person name="Odell C."/>
            <person name="Oliver K."/>
            <person name="O'Neil S."/>
            <person name="Pearson D."/>
            <person name="Quail M.A."/>
            <person name="Rabbinowitsch E."/>
            <person name="Rutherford K.M."/>
            <person name="Rutter S."/>
            <person name="Saunders D."/>
            <person name="Seeger K."/>
            <person name="Sharp S."/>
            <person name="Skelton J."/>
            <person name="Simmonds M.N."/>
            <person name="Squares R."/>
            <person name="Squares S."/>
            <person name="Stevens K."/>
            <person name="Taylor K."/>
            <person name="Taylor R.G."/>
            <person name="Tivey A."/>
            <person name="Walsh S.V."/>
            <person name="Warren T."/>
            <person name="Whitehead S."/>
            <person name="Woodward J.R."/>
            <person name="Volckaert G."/>
            <person name="Aert R."/>
            <person name="Robben J."/>
            <person name="Grymonprez B."/>
            <person name="Weltjens I."/>
            <person name="Vanstreels E."/>
            <person name="Rieger M."/>
            <person name="Schaefer M."/>
            <person name="Mueller-Auer S."/>
            <person name="Gabel C."/>
            <person name="Fuchs M."/>
            <person name="Duesterhoeft A."/>
            <person name="Fritzc C."/>
            <person name="Holzer E."/>
            <person name="Moestl D."/>
            <person name="Hilbert H."/>
            <person name="Borzym K."/>
            <person name="Langer I."/>
            <person name="Beck A."/>
            <person name="Lehrach H."/>
            <person name="Reinhardt R."/>
            <person name="Pohl T.M."/>
            <person name="Eger P."/>
            <person name="Zimmermann W."/>
            <person name="Wedler H."/>
            <person name="Wambutt R."/>
            <person name="Purnelle B."/>
            <person name="Goffeau A."/>
            <person name="Cadieu E."/>
            <person name="Dreano S."/>
            <person name="Gloux S."/>
            <person name="Lelaure V."/>
            <person name="Mottier S."/>
            <person name="Galibert F."/>
            <person name="Aves S.J."/>
            <person name="Xiang Z."/>
            <person name="Hunt C."/>
            <person name="Moore K."/>
            <person name="Hurst S.M."/>
            <person name="Lucas M."/>
            <person name="Rochet M."/>
            <person name="Gaillardin C."/>
            <person name="Tallada V.A."/>
            <person name="Garzon A."/>
            <person name="Thode G."/>
            <person name="Daga R.R."/>
            <person name="Cruzado L."/>
            <person name="Jimenez J."/>
            <person name="Sanchez M."/>
            <person name="del Rey F."/>
            <person name="Benito J."/>
            <person name="Dominguez A."/>
            <person name="Revuelta J.L."/>
            <person name="Moreno S."/>
            <person name="Armstrong J."/>
            <person name="Forsburg S.L."/>
            <person name="Cerutti L."/>
            <person name="Lowe T."/>
            <person name="McCombie W.R."/>
            <person name="Paulsen I."/>
            <person name="Potashkin J."/>
            <person name="Shpakovski G.V."/>
            <person name="Ussery D."/>
            <person name="Barrell B.G."/>
            <person name="Nurse P."/>
        </authorList>
    </citation>
    <scope>NUCLEOTIDE SEQUENCE [LARGE SCALE GENOMIC DNA]</scope>
    <source>
        <strain>972 / ATCC 24843</strain>
    </source>
</reference>
<reference key="2">
    <citation type="journal article" date="2006" name="Nat. Biotechnol.">
        <title>ORFeome cloning and global analysis of protein localization in the fission yeast Schizosaccharomyces pombe.</title>
        <authorList>
            <person name="Matsuyama A."/>
            <person name="Arai R."/>
            <person name="Yashiroda Y."/>
            <person name="Shirai A."/>
            <person name="Kamata A."/>
            <person name="Sekido S."/>
            <person name="Kobayashi Y."/>
            <person name="Hashimoto A."/>
            <person name="Hamamoto M."/>
            <person name="Hiraoka Y."/>
            <person name="Horinouchi S."/>
            <person name="Yoshida M."/>
        </authorList>
    </citation>
    <scope>SUBCELLULAR LOCATION [LARGE SCALE ANALYSIS]</scope>
</reference>
<reference key="3">
    <citation type="journal article" date="2008" name="J. Proteome Res.">
        <title>Phosphoproteome analysis of fission yeast.</title>
        <authorList>
            <person name="Wilson-Grady J.T."/>
            <person name="Villen J."/>
            <person name="Gygi S.P."/>
        </authorList>
    </citation>
    <scope>PHOSPHORYLATION [LARGE SCALE ANALYSIS] AT SER-131</scope>
    <scope>IDENTIFICATION BY MASS SPECTROMETRY</scope>
</reference>
<keyword id="KW-0450">Lipoyl</keyword>
<keyword id="KW-0496">Mitochondrion</keyword>
<keyword id="KW-0597">Phosphoprotein</keyword>
<keyword id="KW-1185">Reference proteome</keyword>
<keyword id="KW-0809">Transit peptide</keyword>
<proteinExistence type="evidence at protein level"/>
<sequence>MLARSALRSGFLPSLTSSVKTGFCLKAAAPTLSMKWSAVKYYSTKHFTKEHEWVKVDGDVGTVGITSYAANALGEVVFVELPEPETTVSVGDGIGAVESVKSASDVYSPVSGTVTSINESLGDSPDKVSSSPEEEGWICKIKLSSPDELKSLLNDESYAQFCKEEDASH</sequence>
<protein>
    <recommendedName>
        <fullName>Putative glycine cleavage system H protein, mitochondrial</fullName>
    </recommendedName>
    <alternativeName>
        <fullName>Glycine decarboxylase complex subunit H</fullName>
    </alternativeName>
</protein>
<name>GCSH_SCHPO</name>
<comment type="function">
    <text evidence="1">The glycine cleavage system (glycine decarboxylase complex) catalyzes the degradation of glycine. The H protein shuttles the methylamine group of glycine from the P protein to the T protein (By similarity).</text>
</comment>
<comment type="cofactor">
    <cofactor evidence="1">
        <name>(R)-lipoate</name>
        <dbReference type="ChEBI" id="CHEBI:83088"/>
    </cofactor>
    <text evidence="1">Binds 1 lipoyl cofactor covalently.</text>
</comment>
<comment type="subunit">
    <text evidence="1">Component of the glycine decarboxylase complex (GDC), which is composed of four proteins: P, T, L and H.</text>
</comment>
<comment type="subcellular location">
    <subcellularLocation>
        <location evidence="4">Mitochondrion</location>
    </subcellularLocation>
</comment>
<comment type="similarity">
    <text evidence="6">Belongs to the GcvH family.</text>
</comment>
<gene>
    <name type="primary">gcv3</name>
    <name type="ORF">SPBP19A11.01</name>
</gene>